<dbReference type="EMBL" id="CP000243">
    <property type="protein sequence ID" value="ABE09062.1"/>
    <property type="molecule type" value="Genomic_DNA"/>
</dbReference>
<dbReference type="RefSeq" id="WP_000940595.1">
    <property type="nucleotide sequence ID" value="NZ_CP064825.1"/>
</dbReference>
<dbReference type="SMR" id="Q1R6F2"/>
<dbReference type="GeneID" id="93778796"/>
<dbReference type="KEGG" id="eci:UTI89_C3618"/>
<dbReference type="HOGENOM" id="CLU_095424_4_1_6"/>
<dbReference type="Proteomes" id="UP000001952">
    <property type="component" value="Chromosome"/>
</dbReference>
<dbReference type="GO" id="GO:0022625">
    <property type="term" value="C:cytosolic large ribosomal subunit"/>
    <property type="evidence" value="ECO:0007669"/>
    <property type="project" value="TreeGrafter"/>
</dbReference>
<dbReference type="GO" id="GO:0003735">
    <property type="term" value="F:structural constituent of ribosome"/>
    <property type="evidence" value="ECO:0007669"/>
    <property type="project" value="InterPro"/>
</dbReference>
<dbReference type="GO" id="GO:0006412">
    <property type="term" value="P:translation"/>
    <property type="evidence" value="ECO:0007669"/>
    <property type="project" value="UniProtKB-UniRule"/>
</dbReference>
<dbReference type="FunFam" id="2.40.50.100:FF:000001">
    <property type="entry name" value="50S ribosomal protein L27"/>
    <property type="match status" value="1"/>
</dbReference>
<dbReference type="Gene3D" id="2.40.50.100">
    <property type="match status" value="1"/>
</dbReference>
<dbReference type="HAMAP" id="MF_00539">
    <property type="entry name" value="Ribosomal_bL27"/>
    <property type="match status" value="1"/>
</dbReference>
<dbReference type="InterPro" id="IPR001684">
    <property type="entry name" value="Ribosomal_bL27"/>
</dbReference>
<dbReference type="InterPro" id="IPR018261">
    <property type="entry name" value="Ribosomal_bL27_CS"/>
</dbReference>
<dbReference type="NCBIfam" id="TIGR00062">
    <property type="entry name" value="L27"/>
    <property type="match status" value="1"/>
</dbReference>
<dbReference type="PANTHER" id="PTHR15893:SF0">
    <property type="entry name" value="LARGE RIBOSOMAL SUBUNIT PROTEIN BL27M"/>
    <property type="match status" value="1"/>
</dbReference>
<dbReference type="PANTHER" id="PTHR15893">
    <property type="entry name" value="RIBOSOMAL PROTEIN L27"/>
    <property type="match status" value="1"/>
</dbReference>
<dbReference type="Pfam" id="PF01016">
    <property type="entry name" value="Ribosomal_L27"/>
    <property type="match status" value="1"/>
</dbReference>
<dbReference type="PRINTS" id="PR00063">
    <property type="entry name" value="RIBOSOMALL27"/>
</dbReference>
<dbReference type="SUPFAM" id="SSF110324">
    <property type="entry name" value="Ribosomal L27 protein-like"/>
    <property type="match status" value="1"/>
</dbReference>
<dbReference type="PROSITE" id="PS00831">
    <property type="entry name" value="RIBOSOMAL_L27"/>
    <property type="match status" value="1"/>
</dbReference>
<reference key="1">
    <citation type="journal article" date="2006" name="Proc. Natl. Acad. Sci. U.S.A.">
        <title>Identification of genes subject to positive selection in uropathogenic strains of Escherichia coli: a comparative genomics approach.</title>
        <authorList>
            <person name="Chen S.L."/>
            <person name="Hung C.-S."/>
            <person name="Xu J."/>
            <person name="Reigstad C.S."/>
            <person name="Magrini V."/>
            <person name="Sabo A."/>
            <person name="Blasiar D."/>
            <person name="Bieri T."/>
            <person name="Meyer R.R."/>
            <person name="Ozersky P."/>
            <person name="Armstrong J.R."/>
            <person name="Fulton R.S."/>
            <person name="Latreille J.P."/>
            <person name="Spieth J."/>
            <person name="Hooton T.M."/>
            <person name="Mardis E.R."/>
            <person name="Hultgren S.J."/>
            <person name="Gordon J.I."/>
        </authorList>
    </citation>
    <scope>NUCLEOTIDE SEQUENCE [LARGE SCALE GENOMIC DNA]</scope>
    <source>
        <strain>UTI89 / UPEC</strain>
    </source>
</reference>
<proteinExistence type="inferred from homology"/>
<protein>
    <recommendedName>
        <fullName evidence="1">Large ribosomal subunit protein bL27</fullName>
    </recommendedName>
    <alternativeName>
        <fullName evidence="3">50S ribosomal protein L27</fullName>
    </alternativeName>
</protein>
<keyword id="KW-0687">Ribonucleoprotein</keyword>
<keyword id="KW-0689">Ribosomal protein</keyword>
<accession>Q1R6F2</accession>
<comment type="similarity">
    <text evidence="1">Belongs to the bacterial ribosomal protein bL27 family.</text>
</comment>
<sequence>MAHKKAGGSTRNGRDSEAKRLGVKRFGGESVLAGSIIVRQRGTKFHAGANVGCGRDHTLFAKADGKVKFEVKGPKNRKFISIEAE</sequence>
<evidence type="ECO:0000255" key="1">
    <source>
        <dbReference type="HAMAP-Rule" id="MF_00539"/>
    </source>
</evidence>
<evidence type="ECO:0000256" key="2">
    <source>
        <dbReference type="SAM" id="MobiDB-lite"/>
    </source>
</evidence>
<evidence type="ECO:0000305" key="3"/>
<organism>
    <name type="scientific">Escherichia coli (strain UTI89 / UPEC)</name>
    <dbReference type="NCBI Taxonomy" id="364106"/>
    <lineage>
        <taxon>Bacteria</taxon>
        <taxon>Pseudomonadati</taxon>
        <taxon>Pseudomonadota</taxon>
        <taxon>Gammaproteobacteria</taxon>
        <taxon>Enterobacterales</taxon>
        <taxon>Enterobacteriaceae</taxon>
        <taxon>Escherichia</taxon>
    </lineage>
</organism>
<feature type="chain" id="PRO_1000017471" description="Large ribosomal subunit protein bL27">
    <location>
        <begin position="1"/>
        <end position="85"/>
    </location>
</feature>
<feature type="region of interest" description="Disordered" evidence="2">
    <location>
        <begin position="1"/>
        <end position="20"/>
    </location>
</feature>
<name>RL27_ECOUT</name>
<gene>
    <name evidence="1" type="primary">rpmA</name>
    <name type="ordered locus">UTI89_C3618</name>
</gene>